<sequence>MTVTKEAPEVMPFEGLTEEINLMSDNERVWWQKTGSMLSRVLSSADYTWKEQHKHLKFYAQVLLPHLGPYPQSFRSSITRSGLPFELSINYQQNGNPLVVRIGFEPLNALSGTPDDPFNQAPAAEVLSLLDQMHIPGFDSQIWDKAVEHHTVNHTEREALRDSDLGAGYIRSQTAYGFDLLRDGNIAVKGYSFPALKCQITGQSMAQMMAGLVADLAPLVDCSQAFAIVDEYLQDTGYDERAFFSWDFVEPSRSRLKLYTGSSSVTWGKLAEVWTLGNRVQNPTVARGLEYLRQLFDLIKLSDGQRNIVVAFDDRQDSSKETPLLWNYEMRAGDPTPLTKIYFPVHGENDLQVINGVAEFLCQIGLSHGKTYVEKVKSYYPGIDLSTTERFTSWVSFAYTEKTGVYLSTYYHSSTDNPWKMTTEEDSQL</sequence>
<accession>A0A2Z5U367</accession>
<keyword id="KW-0637">Prenyltransferase</keyword>
<keyword id="KW-0808">Transferase</keyword>
<protein>
    <recommendedName>
        <fullName evidence="4">Prenyltransferase okaC</fullName>
        <ecNumber evidence="2">2.5.1.-</ecNumber>
    </recommendedName>
    <alternativeName>
        <fullName evidence="4">Okaramines biosynthesis cluster protein C</fullName>
    </alternativeName>
</protein>
<comment type="function">
    <text evidence="2 3">Prenyltransferase; part of the gene cluster that mediates the biosynthesis of okaramine B, a prenylated indole alkaloid that possesses an unusual octacyclic ring system, including a four-membered azetidine ring and an eight-membered azocine ring, and that exhibits insecticidal activity against silkworm larvae (PubMed:28631282, PubMed:29384650). Within the pathway, okaC performs asymmetric reverse prenylation of cyclo(L-Trp-L-Trp) at N-1 and C-2' of the indole ring to produce the cyclic prenylated tryptophan dimer cyclo(N8-(alpha,alpha-dimethylallyl)-L-Trp-6a-(alpha,alpha-dime-thylallyl)-L-Trp) (PubMed:28631282). The biosynthesis begins with the NRPS okaA that condenses two tryptophan molecules into cyclo(L-Trp-L-Trp). Prenylation by the prenyltransferase okaC then leads to the formation of cyclo(N8-(alpha,alpha-dimethylallyl)-L-Trp-6a-(alpha,alpha-dime-thylallyl)-L-Trp). This is followed by indole 2,3-epoxidation by the FAD-dependent monooxygenase okaB to facilitate the formation of the hexahydropyrrolo[2,3-b]indole (HPI) moiety of okaramine C. The cytochrome P450 monooxygenase okaD then likely catalyzes formation of the eight-membered ring of okaramine A. The dioxygenase okaE further forms the unusual 2-dimethyl-3-methyl-azetidine ring to yield 12-deshydroxyl okaramine E, as well as the hydroxylation of 12-deshydroxyl okaramine E to produce okaramine E. The cytochrome P450 monoxygenase okaG converts 12-deshydroxyl okaramine E into 3-desmethyl okaramine B which is further methylated by the methyltransferase okaF into okaramine B. In a shunt pathway, okaG and okaF together are also able to convert okaramine E into okaramine D (PubMed:28631282, PubMed:29384650). Okaramine H is produced by nonenzymatic conversion from okaramine A (PubMed:29384650).</text>
</comment>
<comment type="catalytic activity">
    <reaction evidence="2">
        <text>cyclo(L-Trp-L-Trp) + 2 dimethylallyl diphosphate = cyclo(N(8)-(alpha,alpha-dimethylallyl)-L-Trp-6a-(alpha,alpha-dimethylallyl)-L-Trp) + 2 diphosphate</text>
        <dbReference type="Rhea" id="RHEA:82695"/>
        <dbReference type="ChEBI" id="CHEBI:33019"/>
        <dbReference type="ChEBI" id="CHEBI:57623"/>
        <dbReference type="ChEBI" id="CHEBI:181817"/>
        <dbReference type="ChEBI" id="CHEBI:232460"/>
    </reaction>
    <physiologicalReaction direction="left-to-right" evidence="2">
        <dbReference type="Rhea" id="RHEA:82696"/>
    </physiologicalReaction>
</comment>
<comment type="pathway">
    <text evidence="2 6">Alkaloid biosynthesis.</text>
</comment>
<comment type="disruption phenotype">
    <text evidence="2">Abolishes the production of okaramine B and leads to the accumulation of cyclo(L-Trp-L-Trp).</text>
</comment>
<comment type="similarity">
    <text evidence="5">Belongs to the tryptophan dimethylallyltransferase family.</text>
</comment>
<gene>
    <name evidence="4" type="primary">okaC</name>
</gene>
<name>OKAC_PENOH</name>
<evidence type="ECO:0000250" key="1">
    <source>
        <dbReference type="UniProtKB" id="Q4WAW7"/>
    </source>
</evidence>
<evidence type="ECO:0000269" key="2">
    <source>
    </source>
</evidence>
<evidence type="ECO:0000269" key="3">
    <source>
    </source>
</evidence>
<evidence type="ECO:0000303" key="4">
    <source>
    </source>
</evidence>
<evidence type="ECO:0000305" key="5"/>
<evidence type="ECO:0000305" key="6">
    <source>
    </source>
</evidence>
<proteinExistence type="evidence at protein level"/>
<feature type="chain" id="PRO_0000461557" description="Prenyltransferase okaC">
    <location>
        <begin position="1"/>
        <end position="429"/>
    </location>
</feature>
<feature type="binding site" evidence="1">
    <location>
        <position position="101"/>
    </location>
    <ligand>
        <name>dimethylallyl diphosphate</name>
        <dbReference type="ChEBI" id="CHEBI:57623"/>
    </ligand>
</feature>
<feature type="binding site" evidence="1">
    <location>
        <position position="189"/>
    </location>
    <ligand>
        <name>dimethylallyl diphosphate</name>
        <dbReference type="ChEBI" id="CHEBI:57623"/>
    </ligand>
</feature>
<feature type="binding site" evidence="1">
    <location>
        <position position="191"/>
    </location>
    <ligand>
        <name>dimethylallyl diphosphate</name>
        <dbReference type="ChEBI" id="CHEBI:57623"/>
    </ligand>
</feature>
<feature type="binding site" evidence="1">
    <location>
        <position position="257"/>
    </location>
    <ligand>
        <name>dimethylallyl diphosphate</name>
        <dbReference type="ChEBI" id="CHEBI:57623"/>
    </ligand>
</feature>
<feature type="binding site" evidence="1">
    <location>
        <position position="259"/>
    </location>
    <ligand>
        <name>dimethylallyl diphosphate</name>
        <dbReference type="ChEBI" id="CHEBI:57623"/>
    </ligand>
</feature>
<feature type="binding site" evidence="1">
    <location>
        <position position="342"/>
    </location>
    <ligand>
        <name>dimethylallyl diphosphate</name>
        <dbReference type="ChEBI" id="CHEBI:57623"/>
    </ligand>
</feature>
<feature type="binding site" evidence="1">
    <location>
        <position position="406"/>
    </location>
    <ligand>
        <name>dimethylallyl diphosphate</name>
        <dbReference type="ChEBI" id="CHEBI:57623"/>
    </ligand>
</feature>
<feature type="binding site" evidence="1">
    <location>
        <position position="410"/>
    </location>
    <ligand>
        <name>dimethylallyl diphosphate</name>
        <dbReference type="ChEBI" id="CHEBI:57623"/>
    </ligand>
</feature>
<feature type="site" description="Required for regioselectivity" evidence="1">
    <location>
        <position position="103"/>
    </location>
</feature>
<dbReference type="EC" id="2.5.1.-" evidence="2"/>
<dbReference type="EMBL" id="LC316945">
    <property type="protein sequence ID" value="BBB04329.1"/>
    <property type="molecule type" value="Genomic_DNA"/>
</dbReference>
<dbReference type="GO" id="GO:0004659">
    <property type="term" value="F:prenyltransferase activity"/>
    <property type="evidence" value="ECO:0007669"/>
    <property type="project" value="UniProtKB-KW"/>
</dbReference>
<dbReference type="GO" id="GO:0009820">
    <property type="term" value="P:alkaloid metabolic process"/>
    <property type="evidence" value="ECO:0007669"/>
    <property type="project" value="InterPro"/>
</dbReference>
<dbReference type="CDD" id="cd13929">
    <property type="entry name" value="PT-DMATS_CymD"/>
    <property type="match status" value="1"/>
</dbReference>
<dbReference type="InterPro" id="IPR033964">
    <property type="entry name" value="Aro_prenylTrfase"/>
</dbReference>
<dbReference type="InterPro" id="IPR017795">
    <property type="entry name" value="Aro_prenylTrfase_DMATS"/>
</dbReference>
<dbReference type="InterPro" id="IPR012148">
    <property type="entry name" value="DMATS-type_fun"/>
</dbReference>
<dbReference type="NCBIfam" id="TIGR03429">
    <property type="entry name" value="arom_pren_DMATS"/>
    <property type="match status" value="1"/>
</dbReference>
<dbReference type="PANTHER" id="PTHR40627">
    <property type="entry name" value="INDOLE PRENYLTRANSFERASE TDIB-RELATED"/>
    <property type="match status" value="1"/>
</dbReference>
<dbReference type="PANTHER" id="PTHR40627:SF3">
    <property type="entry name" value="PRENYLTRANSFERASE ASQH2-RELATED"/>
    <property type="match status" value="1"/>
</dbReference>
<dbReference type="Pfam" id="PF11991">
    <property type="entry name" value="Trp_DMAT"/>
    <property type="match status" value="1"/>
</dbReference>
<dbReference type="PIRSF" id="PIRSF000509">
    <property type="entry name" value="Trp_DMAT"/>
    <property type="match status" value="1"/>
</dbReference>
<dbReference type="SFLD" id="SFLDS00036">
    <property type="entry name" value="Aromatic_Prenyltransferase"/>
    <property type="match status" value="1"/>
</dbReference>
<dbReference type="SFLD" id="SFLDG01162">
    <property type="entry name" value="I"/>
    <property type="match status" value="1"/>
</dbReference>
<organism>
    <name type="scientific">Penicillium ochrochloron</name>
    <dbReference type="NCBI Taxonomy" id="69780"/>
    <lineage>
        <taxon>Eukaryota</taxon>
        <taxon>Fungi</taxon>
        <taxon>Dikarya</taxon>
        <taxon>Ascomycota</taxon>
        <taxon>Pezizomycotina</taxon>
        <taxon>Eurotiomycetes</taxon>
        <taxon>Eurotiomycetidae</taxon>
        <taxon>Eurotiales</taxon>
        <taxon>Aspergillaceae</taxon>
        <taxon>Penicillium</taxon>
    </lineage>
</organism>
<reference key="1">
    <citation type="journal article" date="2018" name="ACS Chem. Biol.">
        <title>Biosynthesis and Structure-Activity Relationship Studies of Okaramines That Target Insect Glutamate-Gated Chloride Channels.</title>
        <authorList>
            <person name="Kato N."/>
            <person name="Furutani S."/>
            <person name="Otaka J."/>
            <person name="Noguchi A."/>
            <person name="Kinugasa K."/>
            <person name="Kai K."/>
            <person name="Hayashi H."/>
            <person name="Ihara M."/>
            <person name="Takahashi S."/>
            <person name="Matsuda K."/>
            <person name="Osada H."/>
        </authorList>
    </citation>
    <scope>NUCLEOTIDE SEQUENCE [GENOMIC DNA]</scope>
    <scope>FUNCTION</scope>
    <scope>PATHWAY</scope>
    <source>
        <strain>ATCC 90288 / AK-40</strain>
    </source>
</reference>
<reference key="2">
    <citation type="journal article" date="2017" name="Angew. Chem. Int. Ed.">
        <title>Biosynthesis of Complex Indole Alkaloids: Elucidation of the Concise Pathway of Okaramines.</title>
        <authorList>
            <person name="Lai C.Y."/>
            <person name="Lo I.W."/>
            <person name="Hewage R.T."/>
            <person name="Chen Y.C."/>
            <person name="Chen C.T."/>
            <person name="Lee C.F."/>
            <person name="Lin S."/>
            <person name="Tang M.C."/>
            <person name="Lin H.C."/>
        </authorList>
    </citation>
    <scope>FUNCTION</scope>
    <scope>DISRUPTION PHENOTYPE</scope>
    <scope>CATALYTIC ACTIVITY</scope>
    <scope>PATHWAY</scope>
</reference>